<evidence type="ECO:0000250" key="1"/>
<evidence type="ECO:0000256" key="2">
    <source>
        <dbReference type="SAM" id="MobiDB-lite"/>
    </source>
</evidence>
<evidence type="ECO:0000269" key="3">
    <source>
    </source>
</evidence>
<evidence type="ECO:0000269" key="4">
    <source>
    </source>
</evidence>
<evidence type="ECO:0000269" key="5">
    <source>
    </source>
</evidence>
<evidence type="ECO:0000269" key="6">
    <source>
    </source>
</evidence>
<evidence type="ECO:0000269" key="7">
    <source>
    </source>
</evidence>
<evidence type="ECO:0000269" key="8">
    <source>
    </source>
</evidence>
<evidence type="ECO:0000269" key="9">
    <source>
    </source>
</evidence>
<evidence type="ECO:0000269" key="10">
    <source>
    </source>
</evidence>
<evidence type="ECO:0000269" key="11">
    <source>
    </source>
</evidence>
<evidence type="ECO:0000269" key="12">
    <source>
    </source>
</evidence>
<evidence type="ECO:0000269" key="13">
    <source>
    </source>
</evidence>
<evidence type="ECO:0000269" key="14">
    <source>
    </source>
</evidence>
<evidence type="ECO:0000305" key="15"/>
<evidence type="ECO:0007829" key="16">
    <source>
        <dbReference type="PDB" id="5MHJ"/>
    </source>
</evidence>
<evidence type="ECO:0007829" key="17">
    <source>
        <dbReference type="PDB" id="5MHK"/>
    </source>
</evidence>
<protein>
    <recommendedName>
        <fullName>Major viral transcription factor ICP4</fullName>
    </recommendedName>
    <alternativeName>
        <fullName>Alpha-4 protein</fullName>
    </alternativeName>
    <alternativeName>
        <fullName>Infected cell protein 4</fullName>
    </alternativeName>
    <alternativeName>
        <fullName>Transcriptional activator IE175</fullName>
    </alternativeName>
</protein>
<accession>P08392</accession>
<feature type="chain" id="PRO_0000115815" description="Major viral transcription factor ICP4">
    <location>
        <begin position="1"/>
        <end position="1298"/>
    </location>
</feature>
<feature type="DNA-binding region">
    <location>
        <begin position="262"/>
        <end position="490"/>
    </location>
</feature>
<feature type="region of interest" description="Disordered" evidence="2">
    <location>
        <begin position="1"/>
        <end position="82"/>
    </location>
</feature>
<feature type="region of interest" description="Disordered" evidence="2">
    <location>
        <begin position="94"/>
        <end position="291"/>
    </location>
</feature>
<feature type="region of interest" description="Disordered" evidence="2">
    <location>
        <begin position="534"/>
        <end position="554"/>
    </location>
</feature>
<feature type="region of interest" description="Disordered" evidence="2">
    <location>
        <begin position="594"/>
        <end position="620"/>
    </location>
</feature>
<feature type="region of interest" description="Disordered" evidence="2">
    <location>
        <begin position="718"/>
        <end position="826"/>
    </location>
</feature>
<feature type="region of interest" description="Disordered" evidence="2">
    <location>
        <begin position="877"/>
        <end position="904"/>
    </location>
</feature>
<feature type="compositionally biased region" description="Pro residues" evidence="2">
    <location>
        <begin position="11"/>
        <end position="23"/>
    </location>
</feature>
<feature type="compositionally biased region" description="Acidic residues" evidence="2">
    <location>
        <begin position="37"/>
        <end position="47"/>
    </location>
</feature>
<feature type="compositionally biased region" description="Basic and acidic residues" evidence="2">
    <location>
        <begin position="48"/>
        <end position="63"/>
    </location>
</feature>
<feature type="compositionally biased region" description="Pro residues" evidence="2">
    <location>
        <begin position="100"/>
        <end position="110"/>
    </location>
</feature>
<feature type="compositionally biased region" description="Acidic residues" evidence="2">
    <location>
        <begin position="116"/>
        <end position="127"/>
    </location>
</feature>
<feature type="compositionally biased region" description="Basic and acidic residues" evidence="2">
    <location>
        <begin position="130"/>
        <end position="144"/>
    </location>
</feature>
<feature type="compositionally biased region" description="Low complexity" evidence="2">
    <location>
        <begin position="174"/>
        <end position="198"/>
    </location>
</feature>
<feature type="compositionally biased region" description="Acidic residues" evidence="2">
    <location>
        <begin position="199"/>
        <end position="209"/>
    </location>
</feature>
<feature type="compositionally biased region" description="Basic and acidic residues" evidence="2">
    <location>
        <begin position="210"/>
        <end position="219"/>
    </location>
</feature>
<feature type="compositionally biased region" description="Low complexity" evidence="2">
    <location>
        <begin position="222"/>
        <end position="233"/>
    </location>
</feature>
<feature type="compositionally biased region" description="Pro residues" evidence="2">
    <location>
        <begin position="234"/>
        <end position="244"/>
    </location>
</feature>
<feature type="compositionally biased region" description="Low complexity" evidence="2">
    <location>
        <begin position="245"/>
        <end position="263"/>
    </location>
</feature>
<feature type="compositionally biased region" description="Low complexity" evidence="2">
    <location>
        <begin position="272"/>
        <end position="282"/>
    </location>
</feature>
<feature type="compositionally biased region" description="Basic and acidic residues" evidence="2">
    <location>
        <begin position="544"/>
        <end position="554"/>
    </location>
</feature>
<feature type="compositionally biased region" description="Pro residues" evidence="2">
    <location>
        <begin position="599"/>
        <end position="618"/>
    </location>
</feature>
<feature type="compositionally biased region" description="Pro residues" evidence="2">
    <location>
        <begin position="764"/>
        <end position="783"/>
    </location>
</feature>
<feature type="compositionally biased region" description="Low complexity" evidence="2">
    <location>
        <begin position="784"/>
        <end position="802"/>
    </location>
</feature>
<feature type="helix" evidence="16">
    <location>
        <begin position="295"/>
        <end position="298"/>
    </location>
</feature>
<feature type="helix" evidence="16">
    <location>
        <begin position="301"/>
        <end position="304"/>
    </location>
</feature>
<feature type="strand" evidence="17">
    <location>
        <begin position="307"/>
        <end position="309"/>
    </location>
</feature>
<feature type="strand" evidence="16">
    <location>
        <begin position="326"/>
        <end position="328"/>
    </location>
</feature>
<feature type="strand" evidence="16">
    <location>
        <begin position="335"/>
        <end position="337"/>
    </location>
</feature>
<feature type="helix" evidence="16">
    <location>
        <begin position="343"/>
        <end position="355"/>
    </location>
</feature>
<feature type="helix" evidence="16">
    <location>
        <begin position="364"/>
        <end position="366"/>
    </location>
</feature>
<feature type="helix" evidence="16">
    <location>
        <begin position="369"/>
        <end position="379"/>
    </location>
</feature>
<feature type="helix" evidence="16">
    <location>
        <begin position="387"/>
        <end position="392"/>
    </location>
</feature>
<feature type="helix" evidence="16">
    <location>
        <begin position="398"/>
        <end position="411"/>
    </location>
</feature>
<feature type="helix" evidence="16">
    <location>
        <begin position="432"/>
        <end position="438"/>
    </location>
</feature>
<feature type="helix" evidence="16">
    <location>
        <begin position="441"/>
        <end position="443"/>
    </location>
</feature>
<feature type="helix" evidence="16">
    <location>
        <begin position="444"/>
        <end position="454"/>
    </location>
</feature>
<feature type="strand" evidence="16">
    <location>
        <begin position="456"/>
        <end position="458"/>
    </location>
</feature>
<feature type="helix" evidence="16">
    <location>
        <begin position="460"/>
        <end position="484"/>
    </location>
</feature>
<name>ICP4_HHV11</name>
<dbReference type="EMBL" id="X14112">
    <property type="protein sequence ID" value="CAA32286.1"/>
    <property type="molecule type" value="Genomic_DNA"/>
</dbReference>
<dbReference type="EMBL" id="X14112">
    <property type="protein sequence ID" value="CAA32278.1"/>
    <property type="molecule type" value="Genomic_DNA"/>
</dbReference>
<dbReference type="EMBL" id="X06461">
    <property type="protein sequence ID" value="CAA29763.1"/>
    <property type="molecule type" value="Genomic_DNA"/>
</dbReference>
<dbReference type="EMBL" id="L00036">
    <property type="protein sequence ID" value="AAA96675.1"/>
    <property type="molecule type" value="Genomic_DNA"/>
</dbReference>
<dbReference type="EMBL" id="L00036">
    <property type="protein sequence ID" value="AAA96688.1"/>
    <property type="molecule type" value="Genomic_DNA"/>
</dbReference>
<dbReference type="PIR" id="A23510">
    <property type="entry name" value="EDBE75"/>
</dbReference>
<dbReference type="PDB" id="5MHJ">
    <property type="method" value="X-ray"/>
    <property type="resolution" value="2.12 A"/>
    <property type="chains" value="A/B=288-487"/>
</dbReference>
<dbReference type="PDB" id="5MHK">
    <property type="method" value="X-ray"/>
    <property type="resolution" value="2.28 A"/>
    <property type="chains" value="A/B/C/D=258-487, J=283-286"/>
</dbReference>
<dbReference type="PDBsum" id="5MHJ"/>
<dbReference type="PDBsum" id="5MHK"/>
<dbReference type="BMRB" id="P08392"/>
<dbReference type="SASBDB" id="P08392"/>
<dbReference type="SMR" id="P08392"/>
<dbReference type="BioGRID" id="971428">
    <property type="interactions" value="2"/>
</dbReference>
<dbReference type="BioGRID" id="971429">
    <property type="interactions" value="10"/>
</dbReference>
<dbReference type="IntAct" id="P08392">
    <property type="interactions" value="4"/>
</dbReference>
<dbReference type="MINT" id="P08392"/>
<dbReference type="Proteomes" id="UP000009294">
    <property type="component" value="Segment"/>
</dbReference>
<dbReference type="GO" id="GO:0030430">
    <property type="term" value="C:host cell cytoplasm"/>
    <property type="evidence" value="ECO:0007669"/>
    <property type="project" value="UniProtKB-SubCell"/>
</dbReference>
<dbReference type="GO" id="GO:0042025">
    <property type="term" value="C:host cell nucleus"/>
    <property type="evidence" value="ECO:0007669"/>
    <property type="project" value="UniProtKB-SubCell"/>
</dbReference>
<dbReference type="GO" id="GO:0019033">
    <property type="term" value="C:viral tegument"/>
    <property type="evidence" value="ECO:0000314"/>
    <property type="project" value="CACAO"/>
</dbReference>
<dbReference type="GO" id="GO:0003677">
    <property type="term" value="F:DNA binding"/>
    <property type="evidence" value="ECO:0000269"/>
    <property type="project" value="DisProt"/>
</dbReference>
<dbReference type="GO" id="GO:0039695">
    <property type="term" value="P:DNA-templated viral transcription"/>
    <property type="evidence" value="ECO:0000250"/>
    <property type="project" value="UniProtKB"/>
</dbReference>
<dbReference type="GO" id="GO:0045893">
    <property type="term" value="P:positive regulation of DNA-templated transcription"/>
    <property type="evidence" value="ECO:0007669"/>
    <property type="project" value="InterPro"/>
</dbReference>
<dbReference type="GO" id="GO:0034340">
    <property type="term" value="P:response to type I interferon"/>
    <property type="evidence" value="ECO:0000314"/>
    <property type="project" value="BHF-UCL"/>
</dbReference>
<dbReference type="DisProt" id="DP01305"/>
<dbReference type="InterPro" id="IPR051425">
    <property type="entry name" value="Formin_Homology"/>
</dbReference>
<dbReference type="InterPro" id="IPR005205">
    <property type="entry name" value="Herpes_ICP4_C"/>
</dbReference>
<dbReference type="InterPro" id="IPR005206">
    <property type="entry name" value="Herpes_ICP4_N"/>
</dbReference>
<dbReference type="PANTHER" id="PTHR45725">
    <property type="entry name" value="FORMIN HOMOLOGY 2 FAMILY MEMBER"/>
    <property type="match status" value="1"/>
</dbReference>
<dbReference type="PANTHER" id="PTHR45725:SF18">
    <property type="entry name" value="ORC1-LIKE AAA ATPASE DOMAIN-CONTAINING PROTEIN"/>
    <property type="match status" value="1"/>
</dbReference>
<dbReference type="Pfam" id="PF03585">
    <property type="entry name" value="Herpes_ICP4_C"/>
    <property type="match status" value="1"/>
</dbReference>
<dbReference type="Pfam" id="PF03584">
    <property type="entry name" value="Herpes_ICP4_N"/>
    <property type="match status" value="1"/>
</dbReference>
<proteinExistence type="evidence at protein level"/>
<sequence length="1298" mass="132844">MASENKQRPGSPGPTDGPPPTPSPDRDERGALGWGAETEEGGDDPDHDPDHPHDLDDARRDGRAPAAGTDAGEDAGDAVSPRQLALLASMVEEAVRTIPTPDPAASPPRTPAFRADDDDGDEYDDAADAAGDRAPARGREREAPLRGAYPDPTDRLSPRPPAQPPRRRRHGRWRPSASSTSSDSGSSSSSSASSSSSSSDEDEDDDGNDAADHAREARAVGRGPSSAAPAAPGRTPPPPGPPPLSEAAPKPRAAARTPAASAGRIERRRARAAVAGRDATGRFTAGQPRRVELDADATSGAFYARYRDGYVSGEPWPGAGPPPPGRVLYGGLGDSRPGLWGAPEAEEARRRFEASGAPAAVWAPELGDAAQQYALITRLLYTPDAEAMGWLQNPRVVPGDVALDQACFRISGAARNSSSFITGSVARAVPHLGYAMAAGRFGWGLAHAAAAVAMSRRYDRAQKGFLLTSLRRAYAPLLARENAALTGAAGSPGAGADDEGVAAVAAAAPGERAVPAGYGAAGILAALGRLSAAPASPAGGDDPDAARHADADDDAGRRAQAGRVAVECLAACRGILEALAEGFDGDLAAVPGLAGARPASPPRPEGPAGPASPPPPHADAPRLRAWLRELRFVRDALVLMRLRGDLRVAGGSEAAVAAVRAVSLVAGALGPALPRDPRLPSSAAAAAADLLFDNQSLRPLLAAAASAPDAADALAAAAASAAPREGRKRKSPGPARPPGGGGPRPPKTKKSGADAPGSDARAPLPAPAPPSTPPGPEPAPAQPAAPRAAAAQARPRPVAVSRRPAEGPDPLGGWRRQPPGPSHTAAPAAAALEAYCSPRAVAELTDHPLFPVPWRPALMFDPRALASIAARCAGPAPAAQAACGGGDDDDNPHPHGAAGGRLFGPLRASGPLRRMAAWMRQIPDPEDVRVVVLYSPLPGEDLAGGGASGGPPEWSAERGGLSCLLAALANRLCGPDTAAWAGNWTGAPDVSALGAQGVLLLSTRDLAFAGAVEFLGLLASAGDRRLIVVNTVRACDWPADGPAVSRQHAYLACELLPAVQCAVRWPAARDLRRTVLASGRVFGPGVFARVEAAHARLYPDAPPLRLCRGGNVRYRVRTRFGPDTPVPMSPREYRRAVLPALDGRAAASGTTDAMAPGAPDFCEEEAHSHAACARWGLGAPLRPVYVALGREAVRAGPARWRGPRRDFCARALLEPDDDAPPLVLRGDDDGPGALPPAPPGIRWASATGRSGTVLAAAGAVEVLGAEAGLATPPRREVVDWEGAWDEDDGGAFEGDGVL</sequence>
<organism>
    <name type="scientific">Human herpesvirus 1 (strain 17)</name>
    <name type="common">HHV-1</name>
    <name type="synonym">Human herpes simplex virus 1</name>
    <dbReference type="NCBI Taxonomy" id="10299"/>
    <lineage>
        <taxon>Viruses</taxon>
        <taxon>Duplodnaviria</taxon>
        <taxon>Heunggongvirae</taxon>
        <taxon>Peploviricota</taxon>
        <taxon>Herviviricetes</taxon>
        <taxon>Herpesvirales</taxon>
        <taxon>Orthoherpesviridae</taxon>
        <taxon>Alphaherpesvirinae</taxon>
        <taxon>Simplexvirus</taxon>
        <taxon>Simplexvirus humanalpha1</taxon>
        <taxon>Human herpesvirus 1</taxon>
    </lineage>
</organism>
<reference key="1">
    <citation type="journal article" date="1986" name="Nucleic Acids Res.">
        <title>Complete DNA sequence of the short repeat region in the genome of herpes simplex virus type 1.</title>
        <authorList>
            <person name="McGeoch D.J."/>
            <person name="Dolan A."/>
            <person name="Donald S."/>
            <person name="Brauer D.H.K."/>
        </authorList>
    </citation>
    <scope>NUCLEOTIDE SEQUENCE [GENOMIC DNA]</scope>
</reference>
<reference key="2">
    <citation type="journal article" date="1988" name="J. Gen. Virol.">
        <title>The complete DNA sequence of the long unique region in the genome of herpes simplex virus type 1.</title>
        <authorList>
            <person name="McGeoch D.J."/>
            <person name="Dalrymple M.A."/>
            <person name="Davison A.J."/>
            <person name="Dolan A."/>
            <person name="Frame M.C."/>
            <person name="McNab D."/>
            <person name="Perry L.J."/>
            <person name="Scott J.E."/>
            <person name="Taylor P."/>
        </authorList>
    </citation>
    <scope>NUCLEOTIDE SEQUENCE [LARGE SCALE GENOMIC DNA]</scope>
</reference>
<reference key="3">
    <citation type="journal article" date="1985" name="J. Virol.">
        <title>Isolation of herpes simplex virus regulatory protein ICP4 as a homodimeric complex.</title>
        <authorList>
            <person name="Metzler D.W."/>
            <person name="Wilcox K.W."/>
        </authorList>
    </citation>
    <scope>HOMODIMERIZATION</scope>
</reference>
<reference key="4">
    <citation type="journal article" date="1990" name="Nucleic Acids Res.">
        <title>Codons 262 to 490 from the herpes simplex virus ICP4 gene are sufficient to encode a sequence-specific DNA binding protein.</title>
        <authorList>
            <person name="Wu C.-L."/>
            <person name="Wilcox K.W."/>
        </authorList>
    </citation>
    <scope>DNA-BINDING DOMAIN</scope>
</reference>
<reference key="5">
    <citation type="journal article" date="1991" name="EMBO J.">
        <title>The interaction of ICP4 with cell/infected-cell factors and its state of phosphorylation modulate differential recognition of leader sequences in herpes simplex virus DNA.</title>
        <authorList>
            <person name="Papavassiliou A.G."/>
            <person name="Wilcox K.W."/>
            <person name="Silverstein S.J."/>
        </authorList>
    </citation>
    <scope>FUNCTION</scope>
    <scope>PHOSPHORYLATION</scope>
</reference>
<reference key="6">
    <citation type="journal article" date="1993" name="J. Virol.">
        <title>ICP4, the major transcriptional regulatory protein of herpes simplex virus type 1, forms a tripartite complex with TATA-binding protein and TFIIB.</title>
        <authorList>
            <person name="Smith C.A."/>
            <person name="Bates P."/>
            <person name="Rivera-Gonzalez R."/>
            <person name="Gu B."/>
            <person name="DeLuca N.A."/>
        </authorList>
    </citation>
    <scope>FUNCTION</scope>
    <scope>INTERACTION WITH HOST GTF2B</scope>
</reference>
<reference key="7">
    <citation type="journal article" date="1996" name="Mol. Cell. Biol.">
        <title>Interaction of the viral activator protein ICP4 with TFIID through TAF250.</title>
        <authorList>
            <person name="Carrozza M.J."/>
            <person name="DeLuca N.A."/>
        </authorList>
    </citation>
    <scope>FUNCTION</scope>
    <scope>INTERACTION WITH HOST TBP AND TAF1</scope>
</reference>
<reference key="8">
    <citation type="journal article" date="1997" name="J. Virol.">
        <title>Physical and functional interactions between herpes simplex virus immediate-early proteins ICP4 and ICP27.</title>
        <authorList>
            <person name="Panagiotidis C.A."/>
            <person name="Lium E.K."/>
            <person name="Silverstein S.J."/>
        </authorList>
    </citation>
    <scope>INTERACTION WITH ICP27</scope>
</reference>
<reference key="9">
    <citation type="journal article" date="2008" name="J. Virol.">
        <title>Herpes simplex virus type 1 immediate-early protein ICP27 is required for efficient incorporation of ICP0 and ICP4 into virions.</title>
        <authorList>
            <person name="Sedlackova L."/>
            <person name="Rice S.A."/>
        </authorList>
    </citation>
    <scope>SUBCELLULAR LOCATION</scope>
</reference>
<reference key="10">
    <citation type="journal article" date="2008" name="J. Virol.">
        <title>Binding of ICP4, TATA-binding protein, and RNA polymerase II to herpes simplex virus type 1 immediate-early, early, and late promoters in virus-infected cells.</title>
        <authorList>
            <person name="Sampath P."/>
            <person name="Deluca N.A."/>
        </authorList>
    </citation>
    <scope>FUNCTION</scope>
</reference>
<reference key="11">
    <citation type="journal article" date="2008" name="J. Virol.">
        <title>Stabilized binding of TBP to the TATA box of herpes simplex virus type 1 early (tk) and late (gC) promoters by TFIIA and ICP4.</title>
        <authorList>
            <person name="Zabierowski S.E."/>
            <person name="Deluca N.A."/>
        </authorList>
    </citation>
    <scope>FUNCTION</scope>
</reference>
<reference key="12">
    <citation type="journal article" date="2012" name="J. Virol.">
        <title>The N terminus and C terminus of herpes simplex virus 1 ICP4 cooperate to activate viral gene expression.</title>
        <authorList>
            <person name="Wagner L.M."/>
            <person name="Lester J.T."/>
            <person name="Sivrich F.L."/>
            <person name="DeLuca N.A."/>
        </authorList>
    </citation>
    <scope>FUNCTION</scope>
    <scope>DOMAIN</scope>
</reference>
<reference key="13">
    <citation type="journal article" date="2013" name="J. Virol.">
        <title>Requirement of the N-terminal activation domain of herpes simplex virus ICP4 for viral gene expression.</title>
        <authorList>
            <person name="Wagner L.M."/>
            <person name="Bayer A."/>
            <person name="Deluca N.A."/>
        </authorList>
    </citation>
    <scope>FUNCTION</scope>
</reference>
<reference key="14">
    <citation type="journal article" date="2013" name="PLoS ONE">
        <title>Temporal association of herpes simplex virus ICP4 with cellular complexes functioning at multiple steps in PolII transcription.</title>
        <authorList>
            <person name="Wagner L.M."/>
            <person name="DeLuca N.A."/>
        </authorList>
    </citation>
    <scope>FUNCTION</scope>
</reference>
<reference key="15">
    <citation type="journal article" date="2017" name="Nucleic Acids Res.">
        <title>The herpes viral transcription factor ICP4 forms a novel DNA recognition complex.</title>
        <authorList>
            <person name="Tunnicliffe R.B."/>
            <person name="Lockhart-Cairns M.P."/>
            <person name="Levy C."/>
            <person name="Mould A.P."/>
            <person name="Jowitt T.A."/>
            <person name="Sito H."/>
            <person name="Baldock C."/>
            <person name="Sandri-Goldin R.M."/>
            <person name="Golovanov A.P."/>
        </authorList>
    </citation>
    <scope>X-RAY CRYSTALLOGRAPHY (2.12 ANGSTROMS) OF 288-487</scope>
    <scope>HOMODIMERIZATION</scope>
</reference>
<keyword id="KW-0002">3D-structure</keyword>
<keyword id="KW-0010">Activator</keyword>
<keyword id="KW-0013">ADP-ribosylation</keyword>
<keyword id="KW-0238">DNA-binding</keyword>
<keyword id="KW-0244">Early protein</keyword>
<keyword id="KW-1035">Host cytoplasm</keyword>
<keyword id="KW-1048">Host nucleus</keyword>
<keyword id="KW-0597">Phosphoprotein</keyword>
<keyword id="KW-1185">Reference proteome</keyword>
<keyword id="KW-0804">Transcription</keyword>
<keyword id="KW-0805">Transcription regulation</keyword>
<keyword id="KW-0946">Virion</keyword>
<keyword id="KW-0920">Virion tegument</keyword>
<comment type="function">
    <text evidence="4 5 6 7 8 9 13">Plays an essential role in the regulation of viral gene expression by both activating and repressing host RNA polymerase II-mediated transcription. Binds with high affinity to the sequence 5'-ATCGTC-3'. Activates transcription by recruiting a form of the host TFIID to promoters and stabilizing the pre-initiation complex formation. Negatively regulates its own transcription. This immediate early (IE) protein is absolutely necessary for the transition from IE transcription to later viral gene transcription.</text>
</comment>
<comment type="subunit">
    <text evidence="10 11 12 13 14">Forms homodimers (PubMed:28505309, PubMed:2991559). Interacts with transcriptional regulator ICP27; this interaction is required for proper incorporation of ICP4 into virions (PubMed:8995681). Interacts with host TBP and host TAF1; these interactions help the stabilization of the pre-nitiation complex on specific promoters (PubMed:8649420). Interacts with host GTF2B (PubMed:8392607).</text>
</comment>
<comment type="interaction">
    <interactant intactId="EBI-7185388">
        <id>P08392</id>
    </interactant>
    <interactant intactId="EBI-6883946">
        <id>P10238</id>
        <label>UL54</label>
    </interactant>
    <organismsDiffer>false</organismsDiffer>
    <experiments>5</experiments>
</comment>
<comment type="subcellular location">
    <subcellularLocation>
        <location evidence="3">Host nucleus</location>
    </subcellularLocation>
    <subcellularLocation>
        <location evidence="3">Host cytoplasm</location>
    </subcellularLocation>
    <subcellularLocation>
        <location evidence="3">Virion tegument</location>
    </subcellularLocation>
    <text evidence="1">Localizes to the cytoplasm when phosphorylated.</text>
</comment>
<comment type="domain">
    <text evidence="7">The N-terminal and C-terminal domains are required for the transcriptional activation function of ICP4.</text>
</comment>
<comment type="PTM">
    <text>ADP-ribosylated.</text>
</comment>
<comment type="PTM">
    <text evidence="6">The long stretch of Ser is a major site of phosphorylation. Only the phosphorylated forms are capable of interacting with beta or gamma genes.</text>
</comment>
<comment type="similarity">
    <text evidence="15">Belongs to the herpesviridae ICP4 family.</text>
</comment>
<gene>
    <name type="primary">ICP4</name>
    <name type="synonym">IE175</name>
    <name type="ORF">RS1</name>
</gene>
<organismHost>
    <name type="scientific">Homo sapiens</name>
    <name type="common">Human</name>
    <dbReference type="NCBI Taxonomy" id="9606"/>
</organismHost>